<feature type="chain" id="PRO_1000128810" description="Large ribosomal subunit protein bL27">
    <location>
        <begin position="1"/>
        <end position="85"/>
    </location>
</feature>
<feature type="region of interest" description="Disordered" evidence="2">
    <location>
        <begin position="1"/>
        <end position="20"/>
    </location>
</feature>
<accession>B2U1Z2</accession>
<organism>
    <name type="scientific">Shigella boydii serotype 18 (strain CDC 3083-94 / BS512)</name>
    <dbReference type="NCBI Taxonomy" id="344609"/>
    <lineage>
        <taxon>Bacteria</taxon>
        <taxon>Pseudomonadati</taxon>
        <taxon>Pseudomonadota</taxon>
        <taxon>Gammaproteobacteria</taxon>
        <taxon>Enterobacterales</taxon>
        <taxon>Enterobacteriaceae</taxon>
        <taxon>Shigella</taxon>
    </lineage>
</organism>
<keyword id="KW-1185">Reference proteome</keyword>
<keyword id="KW-0687">Ribonucleoprotein</keyword>
<keyword id="KW-0689">Ribosomal protein</keyword>
<evidence type="ECO:0000255" key="1">
    <source>
        <dbReference type="HAMAP-Rule" id="MF_00539"/>
    </source>
</evidence>
<evidence type="ECO:0000256" key="2">
    <source>
        <dbReference type="SAM" id="MobiDB-lite"/>
    </source>
</evidence>
<evidence type="ECO:0000305" key="3"/>
<dbReference type="EMBL" id="CP001063">
    <property type="protein sequence ID" value="ACD09125.1"/>
    <property type="molecule type" value="Genomic_DNA"/>
</dbReference>
<dbReference type="RefSeq" id="WP_000940595.1">
    <property type="nucleotide sequence ID" value="NC_010658.1"/>
</dbReference>
<dbReference type="SMR" id="B2U1Z2"/>
<dbReference type="STRING" id="344609.SbBS512_E3585"/>
<dbReference type="GeneID" id="93778796"/>
<dbReference type="KEGG" id="sbc:SbBS512_E3585"/>
<dbReference type="HOGENOM" id="CLU_095424_4_1_6"/>
<dbReference type="Proteomes" id="UP000001030">
    <property type="component" value="Chromosome"/>
</dbReference>
<dbReference type="GO" id="GO:0022625">
    <property type="term" value="C:cytosolic large ribosomal subunit"/>
    <property type="evidence" value="ECO:0007669"/>
    <property type="project" value="TreeGrafter"/>
</dbReference>
<dbReference type="GO" id="GO:0003735">
    <property type="term" value="F:structural constituent of ribosome"/>
    <property type="evidence" value="ECO:0007669"/>
    <property type="project" value="InterPro"/>
</dbReference>
<dbReference type="GO" id="GO:0006412">
    <property type="term" value="P:translation"/>
    <property type="evidence" value="ECO:0007669"/>
    <property type="project" value="UniProtKB-UniRule"/>
</dbReference>
<dbReference type="FunFam" id="2.40.50.100:FF:000001">
    <property type="entry name" value="50S ribosomal protein L27"/>
    <property type="match status" value="1"/>
</dbReference>
<dbReference type="Gene3D" id="2.40.50.100">
    <property type="match status" value="1"/>
</dbReference>
<dbReference type="HAMAP" id="MF_00539">
    <property type="entry name" value="Ribosomal_bL27"/>
    <property type="match status" value="1"/>
</dbReference>
<dbReference type="InterPro" id="IPR001684">
    <property type="entry name" value="Ribosomal_bL27"/>
</dbReference>
<dbReference type="InterPro" id="IPR018261">
    <property type="entry name" value="Ribosomal_bL27_CS"/>
</dbReference>
<dbReference type="NCBIfam" id="TIGR00062">
    <property type="entry name" value="L27"/>
    <property type="match status" value="1"/>
</dbReference>
<dbReference type="PANTHER" id="PTHR15893:SF0">
    <property type="entry name" value="LARGE RIBOSOMAL SUBUNIT PROTEIN BL27M"/>
    <property type="match status" value="1"/>
</dbReference>
<dbReference type="PANTHER" id="PTHR15893">
    <property type="entry name" value="RIBOSOMAL PROTEIN L27"/>
    <property type="match status" value="1"/>
</dbReference>
<dbReference type="Pfam" id="PF01016">
    <property type="entry name" value="Ribosomal_L27"/>
    <property type="match status" value="1"/>
</dbReference>
<dbReference type="PRINTS" id="PR00063">
    <property type="entry name" value="RIBOSOMALL27"/>
</dbReference>
<dbReference type="SUPFAM" id="SSF110324">
    <property type="entry name" value="Ribosomal L27 protein-like"/>
    <property type="match status" value="1"/>
</dbReference>
<dbReference type="PROSITE" id="PS00831">
    <property type="entry name" value="RIBOSOMAL_L27"/>
    <property type="match status" value="1"/>
</dbReference>
<sequence>MAHKKAGGSTRNGRDSEAKRLGVKRFGGESVLAGSIIVRQRGTKFHAGANVGCGRDHTLFAKADGKVKFEVKGPKNRKFISIEAE</sequence>
<protein>
    <recommendedName>
        <fullName evidence="1">Large ribosomal subunit protein bL27</fullName>
    </recommendedName>
    <alternativeName>
        <fullName evidence="3">50S ribosomal protein L27</fullName>
    </alternativeName>
</protein>
<name>RL27_SHIB3</name>
<proteinExistence type="inferred from homology"/>
<reference key="1">
    <citation type="submission" date="2008-05" db="EMBL/GenBank/DDBJ databases">
        <title>Complete sequence of Shigella boydii serotype 18 strain BS512.</title>
        <authorList>
            <person name="Rasko D.A."/>
            <person name="Rosovitz M."/>
            <person name="Maurelli A.T."/>
            <person name="Myers G."/>
            <person name="Seshadri R."/>
            <person name="Cer R."/>
            <person name="Jiang L."/>
            <person name="Ravel J."/>
            <person name="Sebastian Y."/>
        </authorList>
    </citation>
    <scope>NUCLEOTIDE SEQUENCE [LARGE SCALE GENOMIC DNA]</scope>
    <source>
        <strain>CDC 3083-94 / BS512</strain>
    </source>
</reference>
<comment type="similarity">
    <text evidence="1">Belongs to the bacterial ribosomal protein bL27 family.</text>
</comment>
<gene>
    <name evidence="1" type="primary">rpmA</name>
    <name type="ordered locus">SbBS512_E3585</name>
</gene>